<name>Y3066_GEOKA</name>
<accession>Q5KVD5</accession>
<comment type="function">
    <text evidence="1">Displays ATPase and GTPase activities.</text>
</comment>
<comment type="similarity">
    <text evidence="1">Belongs to the RapZ-like family.</text>
</comment>
<sequence length="298" mass="34066">MGQNGALQPIQLVIITGMSGAGKTVAIQSFEDLGFFCIDNLPPTLLPKFLELVKESGNKMNKVALVMDLRSRDFFDHLFAALDELAEQAWVIPQVLFLDAQDSTLVARYKETRRTHPLAPNEPPLEGIRLERKLLEELKGRAQIIYDTTGLKPRELREKIIRQFSSHAQSGFTINVMSFGFKYGIPIDADLVFDVRFLPNPHYIEHMRPKTGLDDDVSSYVLKWGETQKFLEKLIDLLSFMLPYYQREGKSQLVIAIGCTGGQHRSVALAEYIARHFSDDYKTVVSHRDMERRKDIHR</sequence>
<dbReference type="EMBL" id="BA000043">
    <property type="protein sequence ID" value="BAD77351.1"/>
    <property type="molecule type" value="Genomic_DNA"/>
</dbReference>
<dbReference type="SMR" id="Q5KVD5"/>
<dbReference type="STRING" id="235909.GK3066"/>
<dbReference type="KEGG" id="gka:GK3066"/>
<dbReference type="eggNOG" id="COG1660">
    <property type="taxonomic scope" value="Bacteria"/>
</dbReference>
<dbReference type="HOGENOM" id="CLU_059558_0_0_9"/>
<dbReference type="Proteomes" id="UP000001172">
    <property type="component" value="Chromosome"/>
</dbReference>
<dbReference type="GO" id="GO:0005524">
    <property type="term" value="F:ATP binding"/>
    <property type="evidence" value="ECO:0007669"/>
    <property type="project" value="UniProtKB-UniRule"/>
</dbReference>
<dbReference type="GO" id="GO:0005525">
    <property type="term" value="F:GTP binding"/>
    <property type="evidence" value="ECO:0007669"/>
    <property type="project" value="UniProtKB-UniRule"/>
</dbReference>
<dbReference type="Gene3D" id="3.40.50.300">
    <property type="entry name" value="P-loop containing nucleotide triphosphate hydrolases"/>
    <property type="match status" value="1"/>
</dbReference>
<dbReference type="HAMAP" id="MF_00636">
    <property type="entry name" value="RapZ_like"/>
    <property type="match status" value="1"/>
</dbReference>
<dbReference type="InterPro" id="IPR027417">
    <property type="entry name" value="P-loop_NTPase"/>
</dbReference>
<dbReference type="InterPro" id="IPR005337">
    <property type="entry name" value="RapZ-like"/>
</dbReference>
<dbReference type="InterPro" id="IPR053930">
    <property type="entry name" value="RapZ-like_N"/>
</dbReference>
<dbReference type="InterPro" id="IPR053931">
    <property type="entry name" value="RapZ_C"/>
</dbReference>
<dbReference type="NCBIfam" id="NF003828">
    <property type="entry name" value="PRK05416.1"/>
    <property type="match status" value="1"/>
</dbReference>
<dbReference type="PANTHER" id="PTHR30448">
    <property type="entry name" value="RNASE ADAPTER PROTEIN RAPZ"/>
    <property type="match status" value="1"/>
</dbReference>
<dbReference type="PANTHER" id="PTHR30448:SF0">
    <property type="entry name" value="RNASE ADAPTER PROTEIN RAPZ"/>
    <property type="match status" value="1"/>
</dbReference>
<dbReference type="Pfam" id="PF22740">
    <property type="entry name" value="PapZ_C"/>
    <property type="match status" value="1"/>
</dbReference>
<dbReference type="Pfam" id="PF03668">
    <property type="entry name" value="RapZ-like_N"/>
    <property type="match status" value="1"/>
</dbReference>
<dbReference type="PIRSF" id="PIRSF005052">
    <property type="entry name" value="P-loopkin"/>
    <property type="match status" value="1"/>
</dbReference>
<dbReference type="SUPFAM" id="SSF52540">
    <property type="entry name" value="P-loop containing nucleoside triphosphate hydrolases"/>
    <property type="match status" value="1"/>
</dbReference>
<keyword id="KW-0067">ATP-binding</keyword>
<keyword id="KW-0342">GTP-binding</keyword>
<keyword id="KW-0547">Nucleotide-binding</keyword>
<keyword id="KW-1185">Reference proteome</keyword>
<gene>
    <name type="ordered locus">GK3066</name>
</gene>
<evidence type="ECO:0000255" key="1">
    <source>
        <dbReference type="HAMAP-Rule" id="MF_00636"/>
    </source>
</evidence>
<feature type="chain" id="PRO_0000107711" description="Nucleotide-binding protein GK3066">
    <location>
        <begin position="1"/>
        <end position="298"/>
    </location>
</feature>
<feature type="binding site" evidence="1">
    <location>
        <begin position="17"/>
        <end position="24"/>
    </location>
    <ligand>
        <name>ATP</name>
        <dbReference type="ChEBI" id="CHEBI:30616"/>
    </ligand>
</feature>
<feature type="binding site" evidence="1">
    <location>
        <begin position="68"/>
        <end position="71"/>
    </location>
    <ligand>
        <name>GTP</name>
        <dbReference type="ChEBI" id="CHEBI:37565"/>
    </ligand>
</feature>
<proteinExistence type="inferred from homology"/>
<organism>
    <name type="scientific">Geobacillus kaustophilus (strain HTA426)</name>
    <dbReference type="NCBI Taxonomy" id="235909"/>
    <lineage>
        <taxon>Bacteria</taxon>
        <taxon>Bacillati</taxon>
        <taxon>Bacillota</taxon>
        <taxon>Bacilli</taxon>
        <taxon>Bacillales</taxon>
        <taxon>Anoxybacillaceae</taxon>
        <taxon>Geobacillus</taxon>
        <taxon>Geobacillus thermoleovorans group</taxon>
    </lineage>
</organism>
<protein>
    <recommendedName>
        <fullName evidence="1">Nucleotide-binding protein GK3066</fullName>
    </recommendedName>
</protein>
<reference key="1">
    <citation type="journal article" date="2004" name="Nucleic Acids Res.">
        <title>Thermoadaptation trait revealed by the genome sequence of thermophilic Geobacillus kaustophilus.</title>
        <authorList>
            <person name="Takami H."/>
            <person name="Takaki Y."/>
            <person name="Chee G.-J."/>
            <person name="Nishi S."/>
            <person name="Shimamura S."/>
            <person name="Suzuki H."/>
            <person name="Matsui S."/>
            <person name="Uchiyama I."/>
        </authorList>
    </citation>
    <scope>NUCLEOTIDE SEQUENCE [LARGE SCALE GENOMIC DNA]</scope>
    <source>
        <strain>HTA426</strain>
    </source>
</reference>